<feature type="chain" id="PRO_0000072961" description="Glycine--tRNA ligase">
    <location>
        <begin position="1"/>
        <end position="451"/>
    </location>
</feature>
<feature type="binding site" evidence="1">
    <location>
        <position position="94"/>
    </location>
    <ligand>
        <name>substrate</name>
    </ligand>
</feature>
<feature type="binding site" evidence="1">
    <location>
        <position position="164"/>
    </location>
    <ligand>
        <name>substrate</name>
    </ligand>
</feature>
<feature type="binding site" evidence="1">
    <location>
        <begin position="196"/>
        <end position="198"/>
    </location>
    <ligand>
        <name>ATP</name>
        <dbReference type="ChEBI" id="CHEBI:30616"/>
    </ligand>
</feature>
<feature type="binding site" evidence="1">
    <location>
        <begin position="206"/>
        <end position="211"/>
    </location>
    <ligand>
        <name>ATP</name>
        <dbReference type="ChEBI" id="CHEBI:30616"/>
    </ligand>
</feature>
<feature type="binding site" evidence="1">
    <location>
        <begin position="211"/>
        <end position="215"/>
    </location>
    <ligand>
        <name>substrate</name>
    </ligand>
</feature>
<feature type="binding site" evidence="1">
    <location>
        <begin position="281"/>
        <end position="282"/>
    </location>
    <ligand>
        <name>ATP</name>
        <dbReference type="ChEBI" id="CHEBI:30616"/>
    </ligand>
</feature>
<feature type="binding site" evidence="1">
    <location>
        <begin position="321"/>
        <end position="325"/>
    </location>
    <ligand>
        <name>substrate</name>
    </ligand>
</feature>
<feature type="binding site" evidence="1">
    <location>
        <begin position="325"/>
        <end position="328"/>
    </location>
    <ligand>
        <name>ATP</name>
        <dbReference type="ChEBI" id="CHEBI:30616"/>
    </ligand>
</feature>
<accession>Q6F1J8</accession>
<protein>
    <recommendedName>
        <fullName evidence="1">Glycine--tRNA ligase</fullName>
        <ecNumber evidence="1">6.1.1.14</ecNumber>
    </recommendedName>
    <alternativeName>
        <fullName evidence="1">Glycyl-tRNA synthetase</fullName>
        <shortName evidence="1">GlyRS</shortName>
    </alternativeName>
</protein>
<keyword id="KW-0030">Aminoacyl-tRNA synthetase</keyword>
<keyword id="KW-0067">ATP-binding</keyword>
<keyword id="KW-0963">Cytoplasm</keyword>
<keyword id="KW-0436">Ligase</keyword>
<keyword id="KW-0547">Nucleotide-binding</keyword>
<keyword id="KW-0648">Protein biosynthesis</keyword>
<keyword id="KW-1185">Reference proteome</keyword>
<dbReference type="EC" id="6.1.1.14" evidence="1"/>
<dbReference type="EMBL" id="AE017263">
    <property type="protein sequence ID" value="AAT75625.1"/>
    <property type="molecule type" value="Genomic_DNA"/>
</dbReference>
<dbReference type="RefSeq" id="WP_011183165.1">
    <property type="nucleotide sequence ID" value="NC_006055.1"/>
</dbReference>
<dbReference type="RefSeq" id="YP_053509.1">
    <property type="nucleotide sequence ID" value="NC_006055.1"/>
</dbReference>
<dbReference type="SMR" id="Q6F1J8"/>
<dbReference type="STRING" id="265311.Mfl268"/>
<dbReference type="PaxDb" id="265311-Mfl268"/>
<dbReference type="EnsemblBacteria" id="AAT75625">
    <property type="protein sequence ID" value="AAT75625"/>
    <property type="gene ID" value="Mfl268"/>
</dbReference>
<dbReference type="GeneID" id="2898161"/>
<dbReference type="KEGG" id="mfl:Mfl268"/>
<dbReference type="PATRIC" id="fig|265311.5.peg.268"/>
<dbReference type="eggNOG" id="COG0423">
    <property type="taxonomic scope" value="Bacteria"/>
</dbReference>
<dbReference type="HOGENOM" id="CLU_015515_2_0_14"/>
<dbReference type="OrthoDB" id="9760853at2"/>
<dbReference type="Proteomes" id="UP000006647">
    <property type="component" value="Chromosome"/>
</dbReference>
<dbReference type="GO" id="GO:0005737">
    <property type="term" value="C:cytoplasm"/>
    <property type="evidence" value="ECO:0007669"/>
    <property type="project" value="UniProtKB-SubCell"/>
</dbReference>
<dbReference type="GO" id="GO:0005524">
    <property type="term" value="F:ATP binding"/>
    <property type="evidence" value="ECO:0007669"/>
    <property type="project" value="UniProtKB-UniRule"/>
</dbReference>
<dbReference type="GO" id="GO:0004820">
    <property type="term" value="F:glycine-tRNA ligase activity"/>
    <property type="evidence" value="ECO:0000250"/>
    <property type="project" value="UniProtKB"/>
</dbReference>
<dbReference type="GO" id="GO:0046983">
    <property type="term" value="F:protein dimerization activity"/>
    <property type="evidence" value="ECO:0000250"/>
    <property type="project" value="UniProtKB"/>
</dbReference>
<dbReference type="GO" id="GO:0006426">
    <property type="term" value="P:glycyl-tRNA aminoacylation"/>
    <property type="evidence" value="ECO:0007669"/>
    <property type="project" value="UniProtKB-UniRule"/>
</dbReference>
<dbReference type="CDD" id="cd00774">
    <property type="entry name" value="GlyRS-like_core"/>
    <property type="match status" value="1"/>
</dbReference>
<dbReference type="FunFam" id="3.40.50.800:FF:000002">
    <property type="entry name" value="Glycine--tRNA ligase"/>
    <property type="match status" value="1"/>
</dbReference>
<dbReference type="Gene3D" id="3.40.50.800">
    <property type="entry name" value="Anticodon-binding domain"/>
    <property type="match status" value="1"/>
</dbReference>
<dbReference type="Gene3D" id="3.30.930.10">
    <property type="entry name" value="Bira Bifunctional Protein, Domain 2"/>
    <property type="match status" value="1"/>
</dbReference>
<dbReference type="HAMAP" id="MF_00253_B">
    <property type="entry name" value="Gly_tRNA_synth_B"/>
    <property type="match status" value="1"/>
</dbReference>
<dbReference type="InterPro" id="IPR002314">
    <property type="entry name" value="aa-tRNA-synt_IIb"/>
</dbReference>
<dbReference type="InterPro" id="IPR006195">
    <property type="entry name" value="aa-tRNA-synth_II"/>
</dbReference>
<dbReference type="InterPro" id="IPR045864">
    <property type="entry name" value="aa-tRNA-synth_II/BPL/LPL"/>
</dbReference>
<dbReference type="InterPro" id="IPR004154">
    <property type="entry name" value="Anticodon-bd"/>
</dbReference>
<dbReference type="InterPro" id="IPR036621">
    <property type="entry name" value="Anticodon-bd_dom_sf"/>
</dbReference>
<dbReference type="InterPro" id="IPR027031">
    <property type="entry name" value="Gly-tRNA_synthase/POLG2"/>
</dbReference>
<dbReference type="InterPro" id="IPR022961">
    <property type="entry name" value="Gly_tRNA_ligase_bac"/>
</dbReference>
<dbReference type="InterPro" id="IPR033731">
    <property type="entry name" value="GlyRS-like_core"/>
</dbReference>
<dbReference type="InterPro" id="IPR002315">
    <property type="entry name" value="tRNA-synt_gly"/>
</dbReference>
<dbReference type="NCBIfam" id="TIGR00389">
    <property type="entry name" value="glyS_dimeric"/>
    <property type="match status" value="1"/>
</dbReference>
<dbReference type="NCBIfam" id="NF003211">
    <property type="entry name" value="PRK04173.1"/>
    <property type="match status" value="1"/>
</dbReference>
<dbReference type="PANTHER" id="PTHR10745:SF8">
    <property type="entry name" value="DNA POLYMERASE SUBUNIT GAMMA-2, MITOCHONDRIAL"/>
    <property type="match status" value="1"/>
</dbReference>
<dbReference type="PANTHER" id="PTHR10745">
    <property type="entry name" value="GLYCYL-TRNA SYNTHETASE/DNA POLYMERASE SUBUNIT GAMMA-2"/>
    <property type="match status" value="1"/>
</dbReference>
<dbReference type="Pfam" id="PF03129">
    <property type="entry name" value="HGTP_anticodon"/>
    <property type="match status" value="1"/>
</dbReference>
<dbReference type="Pfam" id="PF00587">
    <property type="entry name" value="tRNA-synt_2b"/>
    <property type="match status" value="1"/>
</dbReference>
<dbReference type="PRINTS" id="PR01043">
    <property type="entry name" value="TRNASYNTHGLY"/>
</dbReference>
<dbReference type="SUPFAM" id="SSF52954">
    <property type="entry name" value="Class II aaRS ABD-related"/>
    <property type="match status" value="1"/>
</dbReference>
<dbReference type="SUPFAM" id="SSF55681">
    <property type="entry name" value="Class II aaRS and biotin synthetases"/>
    <property type="match status" value="1"/>
</dbReference>
<dbReference type="PROSITE" id="PS50862">
    <property type="entry name" value="AA_TRNA_LIGASE_II"/>
    <property type="match status" value="1"/>
</dbReference>
<comment type="function">
    <text evidence="1">Catalyzes the attachment of glycine to tRNA(Gly).</text>
</comment>
<comment type="catalytic activity">
    <reaction evidence="1">
        <text>tRNA(Gly) + glycine + ATP = glycyl-tRNA(Gly) + AMP + diphosphate</text>
        <dbReference type="Rhea" id="RHEA:16013"/>
        <dbReference type="Rhea" id="RHEA-COMP:9664"/>
        <dbReference type="Rhea" id="RHEA-COMP:9683"/>
        <dbReference type="ChEBI" id="CHEBI:30616"/>
        <dbReference type="ChEBI" id="CHEBI:33019"/>
        <dbReference type="ChEBI" id="CHEBI:57305"/>
        <dbReference type="ChEBI" id="CHEBI:78442"/>
        <dbReference type="ChEBI" id="CHEBI:78522"/>
        <dbReference type="ChEBI" id="CHEBI:456215"/>
        <dbReference type="EC" id="6.1.1.14"/>
    </reaction>
</comment>
<comment type="subunit">
    <text evidence="1">Homodimer.</text>
</comment>
<comment type="subcellular location">
    <subcellularLocation>
        <location evidence="1">Cytoplasm</location>
    </subcellularLocation>
</comment>
<comment type="similarity">
    <text evidence="1">Belongs to the class-II aminoacyl-tRNA synthetase family.</text>
</comment>
<evidence type="ECO:0000255" key="1">
    <source>
        <dbReference type="HAMAP-Rule" id="MF_00253"/>
    </source>
</evidence>
<reference key="1">
    <citation type="submission" date="2004-06" db="EMBL/GenBank/DDBJ databases">
        <authorList>
            <person name="Birren B.W."/>
            <person name="Stange-Thomann N."/>
            <person name="Hafez N."/>
            <person name="DeCaprio D."/>
            <person name="Fisher S."/>
            <person name="Butler J."/>
            <person name="Elkins T."/>
            <person name="Kodira C.D."/>
            <person name="Major J."/>
            <person name="Wang S."/>
            <person name="Nicol R."/>
            <person name="Nusbaum C."/>
        </authorList>
    </citation>
    <scope>NUCLEOTIDE SEQUENCE [LARGE SCALE GENOMIC DNA]</scope>
    <source>
        <strain>ATCC 33453 / NBRC 100688 / NCTC 11704 / L1</strain>
    </source>
</reference>
<sequence length="451" mass="52367">MEKLIAHLKSQGFIFQGSEIYGGLANSWDYGPLGVEVKNKLKQAWWNHFVRKNPYNIGLDSSIILNSSVWKASGHIDGFNDPLIDCKKCNSRWRADKLIEEFNSEINAGVMTENQMEEFIREQNIKCPKCQACDFTQIRKFALMFKTNQGVLEDESSSVYLRPETAQGIFINFKNAQRSLRKKLPFGIGQIGKSFRNEITPGNFIFRTREFEQMELEFFFNPSDEKDWFSYWLNEVETFLQDKIQINKENYRVRSHEKDELAHYSTATSDIEFKFPFGWGELWGVAHRGNFDLNAHQEASKQDLTYLDPTTNQKVLPHVIEPSVGVERMMLAILWQAYHEEDLGEGNSRIVMKLPYNLAPYQIAVMPLQKQQNDQAQALYSNLLNNFDVTYDETGNVGKRYRRQDAIGTPFVITVDFDTPETNSVTVRERDSMEQVRINLDELEAYLKAKF</sequence>
<name>SYG_MESFL</name>
<proteinExistence type="inferred from homology"/>
<gene>
    <name evidence="1" type="primary">glyQS</name>
    <name type="ordered locus">Mfl268</name>
</gene>
<organism>
    <name type="scientific">Mesoplasma florum (strain ATCC 33453 / NBRC 100688 / NCTC 11704 / L1)</name>
    <name type="common">Acholeplasma florum</name>
    <dbReference type="NCBI Taxonomy" id="265311"/>
    <lineage>
        <taxon>Bacteria</taxon>
        <taxon>Bacillati</taxon>
        <taxon>Mycoplasmatota</taxon>
        <taxon>Mollicutes</taxon>
        <taxon>Entomoplasmatales</taxon>
        <taxon>Entomoplasmataceae</taxon>
        <taxon>Mesoplasma</taxon>
    </lineage>
</organism>